<protein>
    <recommendedName>
        <fullName evidence="1">Uridylate kinase</fullName>
        <shortName evidence="1">UK</shortName>
        <ecNumber evidence="1">2.7.4.22</ecNumber>
    </recommendedName>
    <alternativeName>
        <fullName evidence="1">Uridine monophosphate kinase</fullName>
        <shortName evidence="1">UMP kinase</shortName>
        <shortName evidence="1">UMPK</shortName>
    </alternativeName>
</protein>
<accession>Q6LN26</accession>
<feature type="chain" id="PRO_1000053974" description="Uridylate kinase">
    <location>
        <begin position="1"/>
        <end position="240"/>
    </location>
</feature>
<feature type="region of interest" description="Involved in allosteric activation by GTP" evidence="1">
    <location>
        <begin position="23"/>
        <end position="28"/>
    </location>
</feature>
<feature type="binding site" evidence="1">
    <location>
        <begin position="15"/>
        <end position="18"/>
    </location>
    <ligand>
        <name>ATP</name>
        <dbReference type="ChEBI" id="CHEBI:30616"/>
    </ligand>
</feature>
<feature type="binding site" evidence="1">
    <location>
        <position position="57"/>
    </location>
    <ligand>
        <name>UMP</name>
        <dbReference type="ChEBI" id="CHEBI:57865"/>
    </ligand>
</feature>
<feature type="binding site" evidence="1">
    <location>
        <position position="58"/>
    </location>
    <ligand>
        <name>ATP</name>
        <dbReference type="ChEBI" id="CHEBI:30616"/>
    </ligand>
</feature>
<feature type="binding site" evidence="1">
    <location>
        <position position="62"/>
    </location>
    <ligand>
        <name>ATP</name>
        <dbReference type="ChEBI" id="CHEBI:30616"/>
    </ligand>
</feature>
<feature type="binding site" evidence="1">
    <location>
        <position position="77"/>
    </location>
    <ligand>
        <name>UMP</name>
        <dbReference type="ChEBI" id="CHEBI:57865"/>
    </ligand>
</feature>
<feature type="binding site" evidence="1">
    <location>
        <begin position="138"/>
        <end position="145"/>
    </location>
    <ligand>
        <name>UMP</name>
        <dbReference type="ChEBI" id="CHEBI:57865"/>
    </ligand>
</feature>
<feature type="binding site" evidence="1">
    <location>
        <position position="165"/>
    </location>
    <ligand>
        <name>ATP</name>
        <dbReference type="ChEBI" id="CHEBI:30616"/>
    </ligand>
</feature>
<feature type="binding site" evidence="1">
    <location>
        <position position="171"/>
    </location>
    <ligand>
        <name>ATP</name>
        <dbReference type="ChEBI" id="CHEBI:30616"/>
    </ligand>
</feature>
<feature type="binding site" evidence="1">
    <location>
        <position position="174"/>
    </location>
    <ligand>
        <name>ATP</name>
        <dbReference type="ChEBI" id="CHEBI:30616"/>
    </ligand>
</feature>
<comment type="function">
    <text evidence="1">Catalyzes the reversible phosphorylation of UMP to UDP.</text>
</comment>
<comment type="catalytic activity">
    <reaction evidence="1">
        <text>UMP + ATP = UDP + ADP</text>
        <dbReference type="Rhea" id="RHEA:24400"/>
        <dbReference type="ChEBI" id="CHEBI:30616"/>
        <dbReference type="ChEBI" id="CHEBI:57865"/>
        <dbReference type="ChEBI" id="CHEBI:58223"/>
        <dbReference type="ChEBI" id="CHEBI:456216"/>
        <dbReference type="EC" id="2.7.4.22"/>
    </reaction>
</comment>
<comment type="activity regulation">
    <text evidence="1">Allosterically activated by GTP. Inhibited by UTP.</text>
</comment>
<comment type="pathway">
    <text evidence="1">Pyrimidine metabolism; CTP biosynthesis via de novo pathway; UDP from UMP (UMPK route): step 1/1.</text>
</comment>
<comment type="subunit">
    <text evidence="1">Homohexamer.</text>
</comment>
<comment type="subcellular location">
    <subcellularLocation>
        <location evidence="1">Cytoplasm</location>
    </subcellularLocation>
</comment>
<comment type="similarity">
    <text evidence="1">Belongs to the UMP kinase family.</text>
</comment>
<gene>
    <name evidence="1" type="primary">pyrH</name>
    <name type="ordered locus">PBPRA2966</name>
</gene>
<evidence type="ECO:0000255" key="1">
    <source>
        <dbReference type="HAMAP-Rule" id="MF_01220"/>
    </source>
</evidence>
<reference key="1">
    <citation type="journal article" date="2005" name="Science">
        <title>Life at depth: Photobacterium profundum genome sequence and expression analysis.</title>
        <authorList>
            <person name="Vezzi A."/>
            <person name="Campanaro S."/>
            <person name="D'Angelo M."/>
            <person name="Simonato F."/>
            <person name="Vitulo N."/>
            <person name="Lauro F.M."/>
            <person name="Cestaro A."/>
            <person name="Malacrida G."/>
            <person name="Simionati B."/>
            <person name="Cannata N."/>
            <person name="Romualdi C."/>
            <person name="Bartlett D.H."/>
            <person name="Valle G."/>
        </authorList>
    </citation>
    <scope>NUCLEOTIDE SEQUENCE [LARGE SCALE GENOMIC DNA]</scope>
    <source>
        <strain>ATCC BAA-1253 / SS9</strain>
    </source>
</reference>
<organism>
    <name type="scientific">Photobacterium profundum (strain SS9)</name>
    <dbReference type="NCBI Taxonomy" id="298386"/>
    <lineage>
        <taxon>Bacteria</taxon>
        <taxon>Pseudomonadati</taxon>
        <taxon>Pseudomonadota</taxon>
        <taxon>Gammaproteobacteria</taxon>
        <taxon>Vibrionales</taxon>
        <taxon>Vibrionaceae</taxon>
        <taxon>Photobacterium</taxon>
    </lineage>
</organism>
<dbReference type="EC" id="2.7.4.22" evidence="1"/>
<dbReference type="EMBL" id="CR378672">
    <property type="protein sequence ID" value="CAG21300.1"/>
    <property type="molecule type" value="Genomic_DNA"/>
</dbReference>
<dbReference type="RefSeq" id="WP_011219567.1">
    <property type="nucleotide sequence ID" value="NC_006370.1"/>
</dbReference>
<dbReference type="SMR" id="Q6LN26"/>
<dbReference type="STRING" id="298386.PBPRA2966"/>
<dbReference type="KEGG" id="ppr:PBPRA2966"/>
<dbReference type="eggNOG" id="COG0528">
    <property type="taxonomic scope" value="Bacteria"/>
</dbReference>
<dbReference type="HOGENOM" id="CLU_033861_0_0_6"/>
<dbReference type="UniPathway" id="UPA00159">
    <property type="reaction ID" value="UER00275"/>
</dbReference>
<dbReference type="Proteomes" id="UP000000593">
    <property type="component" value="Chromosome 1"/>
</dbReference>
<dbReference type="GO" id="GO:0005829">
    <property type="term" value="C:cytosol"/>
    <property type="evidence" value="ECO:0007669"/>
    <property type="project" value="TreeGrafter"/>
</dbReference>
<dbReference type="GO" id="GO:0005524">
    <property type="term" value="F:ATP binding"/>
    <property type="evidence" value="ECO:0007669"/>
    <property type="project" value="UniProtKB-KW"/>
</dbReference>
<dbReference type="GO" id="GO:0033862">
    <property type="term" value="F:UMP kinase activity"/>
    <property type="evidence" value="ECO:0007669"/>
    <property type="project" value="UniProtKB-EC"/>
</dbReference>
<dbReference type="GO" id="GO:0044210">
    <property type="term" value="P:'de novo' CTP biosynthetic process"/>
    <property type="evidence" value="ECO:0007669"/>
    <property type="project" value="UniProtKB-UniRule"/>
</dbReference>
<dbReference type="GO" id="GO:0006225">
    <property type="term" value="P:UDP biosynthetic process"/>
    <property type="evidence" value="ECO:0007669"/>
    <property type="project" value="TreeGrafter"/>
</dbReference>
<dbReference type="CDD" id="cd04254">
    <property type="entry name" value="AAK_UMPK-PyrH-Ec"/>
    <property type="match status" value="1"/>
</dbReference>
<dbReference type="FunFam" id="3.40.1160.10:FF:000001">
    <property type="entry name" value="Uridylate kinase"/>
    <property type="match status" value="1"/>
</dbReference>
<dbReference type="Gene3D" id="3.40.1160.10">
    <property type="entry name" value="Acetylglutamate kinase-like"/>
    <property type="match status" value="1"/>
</dbReference>
<dbReference type="HAMAP" id="MF_01220_B">
    <property type="entry name" value="PyrH_B"/>
    <property type="match status" value="1"/>
</dbReference>
<dbReference type="InterPro" id="IPR036393">
    <property type="entry name" value="AceGlu_kinase-like_sf"/>
</dbReference>
<dbReference type="InterPro" id="IPR001048">
    <property type="entry name" value="Asp/Glu/Uridylate_kinase"/>
</dbReference>
<dbReference type="InterPro" id="IPR011817">
    <property type="entry name" value="Uridylate_kinase"/>
</dbReference>
<dbReference type="InterPro" id="IPR015963">
    <property type="entry name" value="Uridylate_kinase_bac"/>
</dbReference>
<dbReference type="NCBIfam" id="TIGR02075">
    <property type="entry name" value="pyrH_bact"/>
    <property type="match status" value="1"/>
</dbReference>
<dbReference type="PANTHER" id="PTHR42833">
    <property type="entry name" value="URIDYLATE KINASE"/>
    <property type="match status" value="1"/>
</dbReference>
<dbReference type="PANTHER" id="PTHR42833:SF4">
    <property type="entry name" value="URIDYLATE KINASE PUMPKIN, CHLOROPLASTIC"/>
    <property type="match status" value="1"/>
</dbReference>
<dbReference type="Pfam" id="PF00696">
    <property type="entry name" value="AA_kinase"/>
    <property type="match status" value="1"/>
</dbReference>
<dbReference type="PIRSF" id="PIRSF005650">
    <property type="entry name" value="Uridylate_kin"/>
    <property type="match status" value="1"/>
</dbReference>
<dbReference type="SUPFAM" id="SSF53633">
    <property type="entry name" value="Carbamate kinase-like"/>
    <property type="match status" value="1"/>
</dbReference>
<proteinExistence type="inferred from homology"/>
<keyword id="KW-0021">Allosteric enzyme</keyword>
<keyword id="KW-0067">ATP-binding</keyword>
<keyword id="KW-0963">Cytoplasm</keyword>
<keyword id="KW-0418">Kinase</keyword>
<keyword id="KW-0547">Nucleotide-binding</keyword>
<keyword id="KW-0665">Pyrimidine biosynthesis</keyword>
<keyword id="KW-1185">Reference proteome</keyword>
<keyword id="KW-0808">Transferase</keyword>
<name>PYRH_PHOPR</name>
<sequence length="240" mass="25909">MTTNPKPIYQRILLKLSGEALQGSEGFGIDAKVLDRMAQEVKELVELGVQVGLVIGGGNLFRGAGLAEAGMNRVVGDHMGMLATVMNGLAMRDALHRAYVNARVMSAIPLNGVCDSYNWAEAISQLRQGRVVIFAAGTGNPFFTTDSAACLRGIEIEADIVLKATKVDGVYTDDPVKNPDAVLCDKLGFQDVLEKELKVMDLAAFTLARDHKMPIRVFNMTKPGSLRRVVMGEQEGTLIS</sequence>